<protein>
    <recommendedName>
        <fullName evidence="1">Phospho-N-acetylmuramoyl-pentapeptide-transferase</fullName>
        <ecNumber evidence="1">2.7.8.13</ecNumber>
    </recommendedName>
    <alternativeName>
        <fullName evidence="1">UDP-MurNAc-pentapeptide phosphotransferase</fullName>
    </alternativeName>
</protein>
<gene>
    <name evidence="1" type="primary">mraY</name>
    <name type="ordered locus">MXAN_5607</name>
</gene>
<name>MRAY_MYXXD</name>
<organism>
    <name type="scientific">Myxococcus xanthus (strain DK1622)</name>
    <dbReference type="NCBI Taxonomy" id="246197"/>
    <lineage>
        <taxon>Bacteria</taxon>
        <taxon>Pseudomonadati</taxon>
        <taxon>Myxococcota</taxon>
        <taxon>Myxococcia</taxon>
        <taxon>Myxococcales</taxon>
        <taxon>Cystobacterineae</taxon>
        <taxon>Myxococcaceae</taxon>
        <taxon>Myxococcus</taxon>
    </lineage>
</organism>
<reference key="1">
    <citation type="journal article" date="2006" name="Proc. Natl. Acad. Sci. U.S.A.">
        <title>Evolution of sensory complexity recorded in a myxobacterial genome.</title>
        <authorList>
            <person name="Goldman B.S."/>
            <person name="Nierman W.C."/>
            <person name="Kaiser D."/>
            <person name="Slater S.C."/>
            <person name="Durkin A.S."/>
            <person name="Eisen J.A."/>
            <person name="Ronning C.M."/>
            <person name="Barbazuk W.B."/>
            <person name="Blanchard M."/>
            <person name="Field C."/>
            <person name="Halling C."/>
            <person name="Hinkle G."/>
            <person name="Iartchuk O."/>
            <person name="Kim H.S."/>
            <person name="Mackenzie C."/>
            <person name="Madupu R."/>
            <person name="Miller N."/>
            <person name="Shvartsbeyn A."/>
            <person name="Sullivan S.A."/>
            <person name="Vaudin M."/>
            <person name="Wiegand R."/>
            <person name="Kaplan H.B."/>
        </authorList>
    </citation>
    <scope>NUCLEOTIDE SEQUENCE [LARGE SCALE GENOMIC DNA]</scope>
    <source>
        <strain>DK1622</strain>
    </source>
</reference>
<comment type="function">
    <text evidence="1">Catalyzes the initial step of the lipid cycle reactions in the biosynthesis of the cell wall peptidoglycan: transfers peptidoglycan precursor phospho-MurNAc-pentapeptide from UDP-MurNAc-pentapeptide onto the lipid carrier undecaprenyl phosphate, yielding undecaprenyl-pyrophosphoryl-MurNAc-pentapeptide, known as lipid I.</text>
</comment>
<comment type="catalytic activity">
    <reaction evidence="1">
        <text>UDP-N-acetyl-alpha-D-muramoyl-L-alanyl-gamma-D-glutamyl-meso-2,6-diaminopimeloyl-D-alanyl-D-alanine + di-trans,octa-cis-undecaprenyl phosphate = di-trans,octa-cis-undecaprenyl diphospho-N-acetyl-alpha-D-muramoyl-L-alanyl-D-glutamyl-meso-2,6-diaminopimeloyl-D-alanyl-D-alanine + UMP</text>
        <dbReference type="Rhea" id="RHEA:28386"/>
        <dbReference type="ChEBI" id="CHEBI:57865"/>
        <dbReference type="ChEBI" id="CHEBI:60392"/>
        <dbReference type="ChEBI" id="CHEBI:61386"/>
        <dbReference type="ChEBI" id="CHEBI:61387"/>
        <dbReference type="EC" id="2.7.8.13"/>
    </reaction>
</comment>
<comment type="cofactor">
    <cofactor evidence="1">
        <name>Mg(2+)</name>
        <dbReference type="ChEBI" id="CHEBI:18420"/>
    </cofactor>
</comment>
<comment type="pathway">
    <text evidence="1">Cell wall biogenesis; peptidoglycan biosynthesis.</text>
</comment>
<comment type="subcellular location">
    <subcellularLocation>
        <location evidence="1">Cell inner membrane</location>
        <topology evidence="1">Multi-pass membrane protein</topology>
    </subcellularLocation>
</comment>
<comment type="similarity">
    <text evidence="1">Belongs to the glycosyltransferase 4 family. MraY subfamily.</text>
</comment>
<proteinExistence type="inferred from homology"/>
<sequence length="392" mass="42590">MLYLLYEVIQNSEAGRVLNFLRYPTFRIIAAGVFALLLGMLIGPKLIARLRLKQHGQSNVREDTPDSHQKKKGTPTMGGALILLCIAAGTLLFADLKSRAVWVMLLLTLGYGFIGFLDDWLKLSKRNSKGLAGRKKMVLQTFFFLVAVFGLLTTWTLPDGSFGPTLLINTKLTLPFIPTRWFNPDLGWFYVFFAWIVVVGTSNAVNLTDGLDGLAIVPTIVSAITFAVLCYVAGTTLSIADYEVVGGASKLVATPLYQYLGILQVPGGAELAVFCAAIVGAGISFLWFNTYPASVFMGDIGSLALGGALGGLAMLSKNEVVSAIIHGIFFAEILSVMIQVTSFKMTGKRVFKMAPVHHHFELKGMAEPKIIVRFWIVSILCGGVALLSLKLR</sequence>
<accession>Q1D0S7</accession>
<keyword id="KW-0131">Cell cycle</keyword>
<keyword id="KW-0132">Cell division</keyword>
<keyword id="KW-0997">Cell inner membrane</keyword>
<keyword id="KW-1003">Cell membrane</keyword>
<keyword id="KW-0133">Cell shape</keyword>
<keyword id="KW-0961">Cell wall biogenesis/degradation</keyword>
<keyword id="KW-0460">Magnesium</keyword>
<keyword id="KW-0472">Membrane</keyword>
<keyword id="KW-0479">Metal-binding</keyword>
<keyword id="KW-0573">Peptidoglycan synthesis</keyword>
<keyword id="KW-1185">Reference proteome</keyword>
<keyword id="KW-0808">Transferase</keyword>
<keyword id="KW-0812">Transmembrane</keyword>
<keyword id="KW-1133">Transmembrane helix</keyword>
<dbReference type="EC" id="2.7.8.13" evidence="1"/>
<dbReference type="EMBL" id="CP000113">
    <property type="protein sequence ID" value="ABF91493.1"/>
    <property type="molecule type" value="Genomic_DNA"/>
</dbReference>
<dbReference type="RefSeq" id="WP_011555561.1">
    <property type="nucleotide sequence ID" value="NC_008095.1"/>
</dbReference>
<dbReference type="SMR" id="Q1D0S7"/>
<dbReference type="STRING" id="246197.MXAN_5607"/>
<dbReference type="EnsemblBacteria" id="ABF91493">
    <property type="protein sequence ID" value="ABF91493"/>
    <property type="gene ID" value="MXAN_5607"/>
</dbReference>
<dbReference type="GeneID" id="41362853"/>
<dbReference type="KEGG" id="mxa:MXAN_5607"/>
<dbReference type="eggNOG" id="COG0472">
    <property type="taxonomic scope" value="Bacteria"/>
</dbReference>
<dbReference type="HOGENOM" id="CLU_023982_0_0_7"/>
<dbReference type="OrthoDB" id="9805475at2"/>
<dbReference type="UniPathway" id="UPA00219"/>
<dbReference type="Proteomes" id="UP000002402">
    <property type="component" value="Chromosome"/>
</dbReference>
<dbReference type="GO" id="GO:0005886">
    <property type="term" value="C:plasma membrane"/>
    <property type="evidence" value="ECO:0007669"/>
    <property type="project" value="UniProtKB-SubCell"/>
</dbReference>
<dbReference type="GO" id="GO:0046872">
    <property type="term" value="F:metal ion binding"/>
    <property type="evidence" value="ECO:0007669"/>
    <property type="project" value="UniProtKB-KW"/>
</dbReference>
<dbReference type="GO" id="GO:0008963">
    <property type="term" value="F:phospho-N-acetylmuramoyl-pentapeptide-transferase activity"/>
    <property type="evidence" value="ECO:0007669"/>
    <property type="project" value="UniProtKB-UniRule"/>
</dbReference>
<dbReference type="GO" id="GO:0051992">
    <property type="term" value="F:UDP-N-acetylmuramoyl-L-alanyl-D-glutamyl-meso-2,6-diaminopimelyl-D-alanyl-D-alanine:undecaprenyl-phosphate transferase activity"/>
    <property type="evidence" value="ECO:0007669"/>
    <property type="project" value="RHEA"/>
</dbReference>
<dbReference type="GO" id="GO:0051301">
    <property type="term" value="P:cell division"/>
    <property type="evidence" value="ECO:0007669"/>
    <property type="project" value="UniProtKB-KW"/>
</dbReference>
<dbReference type="GO" id="GO:0071555">
    <property type="term" value="P:cell wall organization"/>
    <property type="evidence" value="ECO:0007669"/>
    <property type="project" value="UniProtKB-KW"/>
</dbReference>
<dbReference type="GO" id="GO:0009252">
    <property type="term" value="P:peptidoglycan biosynthetic process"/>
    <property type="evidence" value="ECO:0007669"/>
    <property type="project" value="UniProtKB-UniRule"/>
</dbReference>
<dbReference type="GO" id="GO:0008360">
    <property type="term" value="P:regulation of cell shape"/>
    <property type="evidence" value="ECO:0007669"/>
    <property type="project" value="UniProtKB-KW"/>
</dbReference>
<dbReference type="CDD" id="cd06852">
    <property type="entry name" value="GT_MraY"/>
    <property type="match status" value="1"/>
</dbReference>
<dbReference type="HAMAP" id="MF_00038">
    <property type="entry name" value="MraY"/>
    <property type="match status" value="1"/>
</dbReference>
<dbReference type="InterPro" id="IPR000715">
    <property type="entry name" value="Glycosyl_transferase_4"/>
</dbReference>
<dbReference type="InterPro" id="IPR003524">
    <property type="entry name" value="PNAcMuramoyl-5peptid_Trfase"/>
</dbReference>
<dbReference type="InterPro" id="IPR018480">
    <property type="entry name" value="PNAcMuramoyl-5peptid_Trfase_CS"/>
</dbReference>
<dbReference type="NCBIfam" id="TIGR00445">
    <property type="entry name" value="mraY"/>
    <property type="match status" value="1"/>
</dbReference>
<dbReference type="PANTHER" id="PTHR22926">
    <property type="entry name" value="PHOSPHO-N-ACETYLMURAMOYL-PENTAPEPTIDE-TRANSFERASE"/>
    <property type="match status" value="1"/>
</dbReference>
<dbReference type="PANTHER" id="PTHR22926:SF5">
    <property type="entry name" value="PHOSPHO-N-ACETYLMURAMOYL-PENTAPEPTIDE-TRANSFERASE HOMOLOG"/>
    <property type="match status" value="1"/>
</dbReference>
<dbReference type="Pfam" id="PF00953">
    <property type="entry name" value="Glycos_transf_4"/>
    <property type="match status" value="1"/>
</dbReference>
<dbReference type="Pfam" id="PF10555">
    <property type="entry name" value="MraY_sig1"/>
    <property type="match status" value="1"/>
</dbReference>
<dbReference type="PROSITE" id="PS01347">
    <property type="entry name" value="MRAY_1"/>
    <property type="match status" value="1"/>
</dbReference>
<dbReference type="PROSITE" id="PS01348">
    <property type="entry name" value="MRAY_2"/>
    <property type="match status" value="1"/>
</dbReference>
<evidence type="ECO:0000255" key="1">
    <source>
        <dbReference type="HAMAP-Rule" id="MF_00038"/>
    </source>
</evidence>
<feature type="chain" id="PRO_0000332539" description="Phospho-N-acetylmuramoyl-pentapeptide-transferase">
    <location>
        <begin position="1"/>
        <end position="392"/>
    </location>
</feature>
<feature type="transmembrane region" description="Helical" evidence="1">
    <location>
        <begin position="28"/>
        <end position="48"/>
    </location>
</feature>
<feature type="transmembrane region" description="Helical" evidence="1">
    <location>
        <begin position="76"/>
        <end position="96"/>
    </location>
</feature>
<feature type="transmembrane region" description="Helical" evidence="1">
    <location>
        <begin position="101"/>
        <end position="121"/>
    </location>
</feature>
<feature type="transmembrane region" description="Helical" evidence="1">
    <location>
        <begin position="137"/>
        <end position="157"/>
    </location>
</feature>
<feature type="transmembrane region" description="Helical" evidence="1">
    <location>
        <begin position="181"/>
        <end position="201"/>
    </location>
</feature>
<feature type="transmembrane region" description="Helical" evidence="1">
    <location>
        <begin position="213"/>
        <end position="233"/>
    </location>
</feature>
<feature type="transmembrane region" description="Helical" evidence="1">
    <location>
        <begin position="268"/>
        <end position="288"/>
    </location>
</feature>
<feature type="transmembrane region" description="Helical" evidence="1">
    <location>
        <begin position="295"/>
        <end position="315"/>
    </location>
</feature>
<feature type="transmembrane region" description="Helical" evidence="1">
    <location>
        <begin position="320"/>
        <end position="340"/>
    </location>
</feature>
<feature type="transmembrane region" description="Helical" evidence="1">
    <location>
        <begin position="369"/>
        <end position="389"/>
    </location>
</feature>